<feature type="signal peptide" evidence="2">
    <location>
        <begin position="1"/>
        <end position="23"/>
    </location>
</feature>
<feature type="peptide" id="PRO_0000391699" description="Antimicrobial peptide ISAMP" evidence="2">
    <location>
        <begin position="24"/>
        <end position="69"/>
    </location>
</feature>
<name>ISAMP_IXOSC</name>
<accession>Q8MVA6</accession>
<keyword id="KW-0044">Antibiotic</keyword>
<keyword id="KW-0929">Antimicrobial</keyword>
<keyword id="KW-0903">Direct protein sequencing</keyword>
<keyword id="KW-1185">Reference proteome</keyword>
<keyword id="KW-0964">Secreted</keyword>
<keyword id="KW-0732">Signal</keyword>
<protein>
    <recommendedName>
        <fullName evidence="3">Antimicrobial peptide ISAMP</fullName>
    </recommendedName>
</protein>
<comment type="function">
    <text evidence="2">Has antimicrobial activity against B.cereus (MIC=5.8 ug/ml), B.subtilis (MIC=12.3 ug/ml), S.aureus (MIC=10.4 ug/ml), E.coli Edl 933 (MIC=3.2 ug/ml) and E.coli MG/655 (MIC=4.2 ug/ml). Non-hemolytic.</text>
</comment>
<comment type="subcellular location">
    <subcellularLocation>
        <location evidence="1 2">Secreted</location>
    </subcellularLocation>
</comment>
<comment type="tissue specificity">
    <text evidence="2">Expressed in the fat body, hemocytes and salivary glands of partially-fed female ticks. Not expressed in the midgut.</text>
</comment>
<comment type="mass spectrometry"/>
<sequence>MRAVAIFIVTLLVLECVYFVMSEPDPGQPWQVKAGRPPCYSIPCRKHDECRVGSCSRCNNGLWGDRTCR</sequence>
<proteinExistence type="evidence at protein level"/>
<evidence type="ECO:0000269" key="1">
    <source>
    </source>
</evidence>
<evidence type="ECO:0000269" key="2">
    <source>
    </source>
</evidence>
<evidence type="ECO:0000303" key="3">
    <source>
    </source>
</evidence>
<evidence type="ECO:0000305" key="4"/>
<evidence type="ECO:0000312" key="5">
    <source>
        <dbReference type="EMBL" id="AAM93656.1"/>
    </source>
</evidence>
<dbReference type="EMBL" id="AF483734">
    <property type="protein sequence ID" value="AAM93656.1"/>
    <property type="molecule type" value="mRNA"/>
</dbReference>
<dbReference type="VEuPathDB" id="VectorBase:ISCI008031"/>
<dbReference type="VEuPathDB" id="VectorBase:ISCP_025164"/>
<dbReference type="VEuPathDB" id="VectorBase:ISCW008031"/>
<dbReference type="InParanoid" id="Q8MVA6"/>
<dbReference type="Proteomes" id="UP000001555">
    <property type="component" value="Unplaced"/>
</dbReference>
<dbReference type="GO" id="GO:0005576">
    <property type="term" value="C:extracellular region"/>
    <property type="evidence" value="ECO:0000314"/>
    <property type="project" value="UniProtKB"/>
</dbReference>
<dbReference type="GO" id="GO:0042742">
    <property type="term" value="P:defense response to bacterium"/>
    <property type="evidence" value="ECO:0000314"/>
    <property type="project" value="UniProtKB"/>
</dbReference>
<reference evidence="5" key="1">
    <citation type="journal article" date="2002" name="J. Exp. Biol.">
        <title>Exploring the sialome of the tick Ixodes scapularis.</title>
        <authorList>
            <person name="Valenzuela J.G."/>
            <person name="Francischetti I.M."/>
            <person name="Pham V.M."/>
            <person name="Garfield M.K."/>
            <person name="Mather T.N."/>
            <person name="Ribeiro J.M."/>
        </authorList>
    </citation>
    <scope>NUCLEOTIDE SEQUENCE [MRNA]</scope>
    <scope>SUBCELLULAR LOCATION</scope>
    <source>
        <strain evidence="5">Rhode Island</strain>
        <tissue evidence="5">Salivary gland</tissue>
    </source>
</reference>
<reference evidence="4" key="2">
    <citation type="journal article" date="2009" name="Biochem. Biophys. Res. Commun.">
        <title>Purification and characterization of a novel salivary antimicrobial peptide from the tick, Ixodes scapularis.</title>
        <authorList>
            <person name="Pichu S."/>
            <person name="Ribeiro J.M."/>
            <person name="Mather T.N."/>
        </authorList>
    </citation>
    <scope>PROTEIN SEQUENCE OF 24-42</scope>
    <scope>FUNCTION</scope>
    <scope>SUBCELLULAR LOCATION</scope>
    <scope>TISSUE SPECIFICITY</scope>
    <scope>MASS SPECTROMETRY</scope>
    <source>
        <strain evidence="2">Rhode Island</strain>
        <tissue evidence="2">Saliva</tissue>
    </source>
</reference>
<organism>
    <name type="scientific">Ixodes scapularis</name>
    <name type="common">Black-legged tick</name>
    <name type="synonym">Deer tick</name>
    <dbReference type="NCBI Taxonomy" id="6945"/>
    <lineage>
        <taxon>Eukaryota</taxon>
        <taxon>Metazoa</taxon>
        <taxon>Ecdysozoa</taxon>
        <taxon>Arthropoda</taxon>
        <taxon>Chelicerata</taxon>
        <taxon>Arachnida</taxon>
        <taxon>Acari</taxon>
        <taxon>Parasitiformes</taxon>
        <taxon>Ixodida</taxon>
        <taxon>Ixodoidea</taxon>
        <taxon>Ixodidae</taxon>
        <taxon>Ixodinae</taxon>
        <taxon>Ixodes</taxon>
    </lineage>
</organism>